<gene>
    <name evidence="1" type="primary">rpmH</name>
    <name type="ordered locus">Francci3_4548</name>
</gene>
<feature type="chain" id="PRO_1000013337" description="Large ribosomal subunit protein bL34">
    <location>
        <begin position="1"/>
        <end position="45"/>
    </location>
</feature>
<reference key="1">
    <citation type="journal article" date="2007" name="Genome Res.">
        <title>Genome characteristics of facultatively symbiotic Frankia sp. strains reflect host range and host plant biogeography.</title>
        <authorList>
            <person name="Normand P."/>
            <person name="Lapierre P."/>
            <person name="Tisa L.S."/>
            <person name="Gogarten J.P."/>
            <person name="Alloisio N."/>
            <person name="Bagnarol E."/>
            <person name="Bassi C.A."/>
            <person name="Berry A.M."/>
            <person name="Bickhart D.M."/>
            <person name="Choisne N."/>
            <person name="Couloux A."/>
            <person name="Cournoyer B."/>
            <person name="Cruveiller S."/>
            <person name="Daubin V."/>
            <person name="Demange N."/>
            <person name="Francino M.P."/>
            <person name="Goltsman E."/>
            <person name="Huang Y."/>
            <person name="Kopp O.R."/>
            <person name="Labarre L."/>
            <person name="Lapidus A."/>
            <person name="Lavire C."/>
            <person name="Marechal J."/>
            <person name="Martinez M."/>
            <person name="Mastronunzio J.E."/>
            <person name="Mullin B.C."/>
            <person name="Niemann J."/>
            <person name="Pujic P."/>
            <person name="Rawnsley T."/>
            <person name="Rouy Z."/>
            <person name="Schenowitz C."/>
            <person name="Sellstedt A."/>
            <person name="Tavares F."/>
            <person name="Tomkins J.P."/>
            <person name="Vallenet D."/>
            <person name="Valverde C."/>
            <person name="Wall L.G."/>
            <person name="Wang Y."/>
            <person name="Medigue C."/>
            <person name="Benson D.R."/>
        </authorList>
    </citation>
    <scope>NUCLEOTIDE SEQUENCE [LARGE SCALE GENOMIC DNA]</scope>
    <source>
        <strain>DSM 45818 / CECT 9043 / HFP020203 / CcI3</strain>
    </source>
</reference>
<proteinExistence type="inferred from homology"/>
<accession>Q2J498</accession>
<comment type="similarity">
    <text evidence="1">Belongs to the bacterial ribosomal protein bL34 family.</text>
</comment>
<dbReference type="EMBL" id="CP000249">
    <property type="protein sequence ID" value="ABD13894.1"/>
    <property type="molecule type" value="Genomic_DNA"/>
</dbReference>
<dbReference type="RefSeq" id="WP_011438902.1">
    <property type="nucleotide sequence ID" value="NZ_MSEA01000291.1"/>
</dbReference>
<dbReference type="SMR" id="Q2J498"/>
<dbReference type="STRING" id="106370.Francci3_4548"/>
<dbReference type="KEGG" id="fra:Francci3_4548"/>
<dbReference type="eggNOG" id="COG0230">
    <property type="taxonomic scope" value="Bacteria"/>
</dbReference>
<dbReference type="HOGENOM" id="CLU_129938_2_1_11"/>
<dbReference type="OrthoDB" id="9804832at2"/>
<dbReference type="PhylomeDB" id="Q2J498"/>
<dbReference type="Proteomes" id="UP000001937">
    <property type="component" value="Chromosome"/>
</dbReference>
<dbReference type="GO" id="GO:1990904">
    <property type="term" value="C:ribonucleoprotein complex"/>
    <property type="evidence" value="ECO:0007669"/>
    <property type="project" value="UniProtKB-KW"/>
</dbReference>
<dbReference type="GO" id="GO:0005840">
    <property type="term" value="C:ribosome"/>
    <property type="evidence" value="ECO:0007669"/>
    <property type="project" value="UniProtKB-KW"/>
</dbReference>
<dbReference type="GO" id="GO:0003735">
    <property type="term" value="F:structural constituent of ribosome"/>
    <property type="evidence" value="ECO:0007669"/>
    <property type="project" value="InterPro"/>
</dbReference>
<dbReference type="GO" id="GO:0006412">
    <property type="term" value="P:translation"/>
    <property type="evidence" value="ECO:0007669"/>
    <property type="project" value="UniProtKB-UniRule"/>
</dbReference>
<dbReference type="FunFam" id="1.10.287.3980:FF:000001">
    <property type="entry name" value="Mitochondrial ribosomal protein L34"/>
    <property type="match status" value="1"/>
</dbReference>
<dbReference type="Gene3D" id="1.10.287.3980">
    <property type="match status" value="1"/>
</dbReference>
<dbReference type="HAMAP" id="MF_00391">
    <property type="entry name" value="Ribosomal_bL34"/>
    <property type="match status" value="1"/>
</dbReference>
<dbReference type="InterPro" id="IPR000271">
    <property type="entry name" value="Ribosomal_bL34"/>
</dbReference>
<dbReference type="InterPro" id="IPR020939">
    <property type="entry name" value="Ribosomal_bL34_CS"/>
</dbReference>
<dbReference type="NCBIfam" id="TIGR01030">
    <property type="entry name" value="rpmH_bact"/>
    <property type="match status" value="1"/>
</dbReference>
<dbReference type="PANTHER" id="PTHR14503:SF4">
    <property type="entry name" value="LARGE RIBOSOMAL SUBUNIT PROTEIN BL34M"/>
    <property type="match status" value="1"/>
</dbReference>
<dbReference type="PANTHER" id="PTHR14503">
    <property type="entry name" value="MITOCHONDRIAL RIBOSOMAL PROTEIN 34 FAMILY MEMBER"/>
    <property type="match status" value="1"/>
</dbReference>
<dbReference type="Pfam" id="PF00468">
    <property type="entry name" value="Ribosomal_L34"/>
    <property type="match status" value="1"/>
</dbReference>
<dbReference type="PROSITE" id="PS00784">
    <property type="entry name" value="RIBOSOMAL_L34"/>
    <property type="match status" value="1"/>
</dbReference>
<organism>
    <name type="scientific">Frankia casuarinae (strain DSM 45818 / CECT 9043 / HFP020203 / CcI3)</name>
    <dbReference type="NCBI Taxonomy" id="106370"/>
    <lineage>
        <taxon>Bacteria</taxon>
        <taxon>Bacillati</taxon>
        <taxon>Actinomycetota</taxon>
        <taxon>Actinomycetes</taxon>
        <taxon>Frankiales</taxon>
        <taxon>Frankiaceae</taxon>
        <taxon>Frankia</taxon>
    </lineage>
</organism>
<keyword id="KW-1185">Reference proteome</keyword>
<keyword id="KW-0687">Ribonucleoprotein</keyword>
<keyword id="KW-0689">Ribosomal protein</keyword>
<evidence type="ECO:0000255" key="1">
    <source>
        <dbReference type="HAMAP-Rule" id="MF_00391"/>
    </source>
</evidence>
<evidence type="ECO:0000305" key="2"/>
<sequence>MSKRTFQPNNRRRARTHGFRLRMRTRAGRAILSARRRKGRSELSA</sequence>
<name>RL34_FRACC</name>
<protein>
    <recommendedName>
        <fullName evidence="1">Large ribosomal subunit protein bL34</fullName>
    </recommendedName>
    <alternativeName>
        <fullName evidence="2">50S ribosomal protein L34</fullName>
    </alternativeName>
</protein>